<sequence length="2109" mass="237518">MADSFGFTPMEVLLFGGESVQLLTSDMPIDVQWGFVHSTRCYALWKDDLIHLNPLLKYSQRIAKRWERLVSGFVGPVPLDKLLSLLAKLMRYCVNMGVSVQEIYLSDAIVSSSYMLHVSRSAGCVSFSWLYAKLSMFASCGKFWVGSSHHTAANMIEGSRAVNGPDVAISEMVEAFHLEVKSSLVVTVSLTPREKKILERELGFVPLYKQKSRAPRNHPVLAALREVMRQEYSASCNILNTKLKTLVVGAASREVNCYSSNPSVHYYFANKDSKDLVRTTLELLHSALATKYRNMESGERELMNNLKGCGYIVKRSVENAVYEVVSDKDVAEVLRYAQTVASTKKEAKKKPNTGKRKMVMSEATRRTIELHELSRIVAEEKKIPNHFHFDESDFASVGNFTQLVCEDVGYNFSVDAWLHLFEATGAQTAVGYMALPNELLFEHYPISDYYDYWEGVEKHGSLGGITISPLRNGQVVGMPTGVFQPVHFDKTSAGLGIPGSKMGAAERVICHMSDGLGNGYNHVKSDWQTLLKHPILSSSKYNFAVEVDLTGRYGCLATFRLTRVTGVKYVARTIKLRPEDRYVRVLDLLHIVRSIRLKGHAGLKEPYQYFPVYKREVDTPVSYCFSIAEKSLTVQNIANFIRHHIGGVSLVNKELVSAWRLNPQLVPSFAYAVYFYVVNLRGELDGMLQKLMKKGITWADRLKANVSAFLRDMVDPISFLWTWLFERRLVDQIFQDGTDVFYQMDRACVDEKALRLNDHIKITRDFLPADTLLPEGWSLDDWEKAPDSLKTLSAAASLPVECGAVNCVGKSFKSVRTLLPPSVVTSPVEQFFKSGGKFRDDAEFAELLSAHYRWQMDNSFCACQVCAALTGKTGSQVVECRWKAESMYTFSMSQTEVDDFRNEIKAQSIEKGNRFGEMLIGVHQKIPTQAFEVSVRLEYVKGGPGTGKSFLIRSLADPIRDLVVAPFIKLRSDYQNQRVGDELLSWDFHTPHKALDVTGKQIIFVDEFTAYDWRLLAVLAYRNHAHTIYLVGDEQQTGIQEGRGEGISILNKVDLSKVSTHVPIMNFRNPVRDVKVLNYLFGSRMVPMSSVEKGFSFGDVKEFSSLSNIPDTKIIHYSDETGEHMMPDYVRGVSKTTVRANQGSTYDNVVLPVLPSDLNLINSAELNLVALSRHRNKLTILLDNDGMNIGAVLKGMLEGVPEELERRDYIVGMYLGLHLPIKKEFFFPESEFAKSFRLMVAKYEAFVPYDSNLPTLVLQGDVVVLDIARVENDINDAFNCPDFYNLVSRPNNCLVVAISECLGVTLEKLDNLMQANAVTLDKYHAWLSKKSPSTWQDCRMFADALKVSMYVKVLSDKPYDLTYEVDGAGSSVTLHLVGKESDGHFIAAPLSPSLSTNERESGHDSKKPADDSDTFDAANLFADKGVSSADIEAFCAYLEKTLMATIMEYDLRLQSWANVVDDTDDFYQINISEFRQSTCFGKLLSALEVLKVDVSRKRFISDWLCKNLENKQFRWRWSSSVASTSSAGSNVDDDFVNMAGGKTDANVDPADVLRQSFMDYASEFVPILIAESPILMPLVEPEPILSKCMVPEFDAFLLIKEFDLDNGADEYQCAYLNESVANRVGDKFVSGVLDTDIISPLNLRGHPIAENVKYHSMCVAPAQIYFKRNQWQELQVQQARYLFRKVRNSPSSTQDSVARMVAQLFVSDCLVPNVADTFSASNLWRIMDKAMHDMVTKNYQGQMEEEFTRNAKLYRFQLKDIEKPLKDPETDLAKAGQGILAWSKEAHVKFMVAFRVLNDLLLKSLNSNVVYDNTMSETEFVGKINAAMNIVPDSAINGVIDAAACDSGQGVFTQLIERHIYAALGISDFFLDWYFSFREKYVMQSRYVRAHMSYVKTSGEPGTLLGNTILMGAMLNAMLRGTGPFCMAMKGDDGFKRQANLKINDQMLKLIKKETVLDFKLDLNVPITFCGYALSNGHLFPSVSRKLTKIAAHRFREYKHFCEYQESLRDWIKNLPKDPAVYADFLECNASLSCRNVDDVQRWLDAIISVSRIGREQFMMMFPIREVFMSLPPVEDSLGELSSTKVAVSIGDNVSNVVRKVARVDMKKF</sequence>
<proteinExistence type="evidence at protein level"/>
<reference key="1">
    <citation type="journal article" date="1996" name="Arch. Virol.">
        <title>Complete nucleotide sequence of the Japanese isolate S of beet necrotic yellow vein virus RNA and comparison with European isolates.</title>
        <authorList>
            <person name="Saito M."/>
            <person name="Kiguchi T."/>
            <person name="Kusume T."/>
            <person name="Tamada T."/>
        </authorList>
    </citation>
    <scope>NUCLEOTIDE SEQUENCE [GENOMIC RNA]</scope>
</reference>
<reference key="2">
    <citation type="journal article" date="1997" name="Arch. Virol.">
        <title>Evidence for in vitro and in vivo autocatalytic processing of the primary translation product of beet necrotic yellow vein virus RNA 1 by a papain-like proteinase.</title>
        <authorList>
            <person name="Hehn A."/>
            <person name="Fritsch C."/>
            <person name="Richards K.E."/>
            <person name="Guilley H."/>
            <person name="Jonard G."/>
        </authorList>
    </citation>
    <scope>PROTEOLYTIC PROCESSING</scope>
</reference>
<comment type="function">
    <molecule>Replicase small subunit</molecule>
    <text evidence="4">Is an RNA-dependent RNA polymerase active in viral RNA replication.</text>
</comment>
<comment type="function">
    <molecule>Replicase large subunit</molecule>
    <text evidence="4">Is a methyltransferase active in RNA capping and an RNA helicase. Methyltransferase displays a cytoplasmic capping enzyme activity. This function is necessary since all viral RNAs are synthesized in the cytoplasm, and host capping enzymes are restricted to the nucleus. Helicase region probably exhibits NTPase and RNA unwinding activities. Contains a cysteine protease activity responsible for autocatalytic processing of the 237 kDa protein (Potential).</text>
</comment>
<comment type="catalytic activity">
    <reaction>
        <text>RNA(n) + a ribonucleoside 5'-triphosphate = RNA(n+1) + diphosphate</text>
        <dbReference type="Rhea" id="RHEA:21248"/>
        <dbReference type="Rhea" id="RHEA-COMP:14527"/>
        <dbReference type="Rhea" id="RHEA-COMP:17342"/>
        <dbReference type="ChEBI" id="CHEBI:33019"/>
        <dbReference type="ChEBI" id="CHEBI:61557"/>
        <dbReference type="ChEBI" id="CHEBI:140395"/>
        <dbReference type="EC" id="2.7.7.48"/>
    </reaction>
</comment>
<comment type="catalytic activity">
    <reaction>
        <text>ATP + H2O = ADP + phosphate + H(+)</text>
        <dbReference type="Rhea" id="RHEA:13065"/>
        <dbReference type="ChEBI" id="CHEBI:15377"/>
        <dbReference type="ChEBI" id="CHEBI:15378"/>
        <dbReference type="ChEBI" id="CHEBI:30616"/>
        <dbReference type="ChEBI" id="CHEBI:43474"/>
        <dbReference type="ChEBI" id="CHEBI:456216"/>
        <dbReference type="EC" id="3.6.4.13"/>
    </reaction>
</comment>
<comment type="PTM">
    <text evidence="3">Autocatalytically cleaved by the cysteine protease.</text>
</comment>
<comment type="similarity">
    <text evidence="4">Belongs to the ssRNA positive-strand viruses RNA-directed RNA polymerase family.</text>
</comment>
<keyword id="KW-0067">ATP-binding</keyword>
<keyword id="KW-0175">Coiled coil</keyword>
<keyword id="KW-0347">Helicase</keyword>
<keyword id="KW-0378">Hydrolase</keyword>
<keyword id="KW-0489">Methyltransferase</keyword>
<keyword id="KW-0547">Nucleotide-binding</keyword>
<keyword id="KW-0548">Nucleotidyltransferase</keyword>
<keyword id="KW-0645">Protease</keyword>
<keyword id="KW-1185">Reference proteome</keyword>
<keyword id="KW-0694">RNA-binding</keyword>
<keyword id="KW-0696">RNA-directed RNA polymerase</keyword>
<keyword id="KW-0788">Thiol protease</keyword>
<keyword id="KW-0808">Transferase</keyword>
<keyword id="KW-0693">Viral RNA replication</keyword>
<feature type="chain" id="PRO_0000409655" description="Replicase">
    <location>
        <begin position="1"/>
        <end position="2109"/>
    </location>
</feature>
<feature type="chain" id="PRO_0000409656" description="Replicase large subunit">
    <location>
        <begin position="1"/>
        <end position="1540" status="uncertain"/>
    </location>
</feature>
<feature type="chain" id="PRO_0000409657" description="Replicase small subunit">
    <location>
        <begin position="1541" status="uncertain"/>
        <end position="2109"/>
    </location>
</feature>
<feature type="domain" description="Alphavirus-like MT" evidence="1">
    <location>
        <begin position="209"/>
        <end position="421"/>
    </location>
</feature>
<feature type="domain" description="(+)RNA virus helicase ATP-binding">
    <location>
        <begin position="911"/>
        <end position="1063"/>
    </location>
</feature>
<feature type="domain" description="(+)RNA virus helicase C-terminal">
    <location>
        <begin position="1064"/>
        <end position="1214"/>
    </location>
</feature>
<feature type="region of interest" description="Helicase">
    <location>
        <begin position="939"/>
        <end position="1181"/>
    </location>
</feature>
<feature type="region of interest" description="Protease">
    <location>
        <begin position="1285"/>
        <end position="1388"/>
    </location>
</feature>
<feature type="region of interest" description="Disordered" evidence="2">
    <location>
        <begin position="1390"/>
        <end position="1411"/>
    </location>
</feature>
<feature type="compositionally biased region" description="Basic and acidic residues" evidence="2">
    <location>
        <begin position="1397"/>
        <end position="1410"/>
    </location>
</feature>
<protein>
    <recommendedName>
        <fullName>Replicase</fullName>
    </recommendedName>
    <alternativeName>
        <fullName>237 kDa protein</fullName>
    </alternativeName>
    <component>
        <recommendedName>
            <fullName>Replicase large subunit</fullName>
            <ecNumber>2.1.1.-</ecNumber>
            <ecNumber>2.7.7.-</ecNumber>
            <ecNumber>3.4.22.-</ecNumber>
            <ecNumber>3.6.4.13</ecNumber>
        </recommendedName>
        <alternativeName>
            <fullName>150 kDa protein</fullName>
        </alternativeName>
    </component>
    <component>
        <recommendedName>
            <fullName>Replicase small subunit</fullName>
            <ecNumber>2.7.7.48</ecNumber>
        </recommendedName>
        <alternativeName>
            <fullName>66 kDa protein</fullName>
        </alternativeName>
        <alternativeName>
            <fullName>RdRp</fullName>
        </alternativeName>
    </component>
</protein>
<dbReference type="EC" id="2.1.1.-"/>
<dbReference type="EC" id="2.7.7.-"/>
<dbReference type="EC" id="3.4.22.-"/>
<dbReference type="EC" id="3.6.4.13"/>
<dbReference type="EC" id="2.7.7.48"/>
<dbReference type="EMBL" id="D84410">
    <property type="protein sequence ID" value="BAA12339.1"/>
    <property type="molecule type" value="Genomic_RNA"/>
</dbReference>
<dbReference type="RefSeq" id="NP_612615.1">
    <property type="nucleotide sequence ID" value="NC_003514.1"/>
</dbReference>
<dbReference type="MEROPS" id="C36.001"/>
<dbReference type="KEGG" id="vg:991082"/>
<dbReference type="Proteomes" id="UP000001100">
    <property type="component" value="Genome"/>
</dbReference>
<dbReference type="GO" id="GO:0005524">
    <property type="term" value="F:ATP binding"/>
    <property type="evidence" value="ECO:0007669"/>
    <property type="project" value="UniProtKB-KW"/>
</dbReference>
<dbReference type="GO" id="GO:0016887">
    <property type="term" value="F:ATP hydrolysis activity"/>
    <property type="evidence" value="ECO:0007669"/>
    <property type="project" value="RHEA"/>
</dbReference>
<dbReference type="GO" id="GO:0008234">
    <property type="term" value="F:cysteine-type peptidase activity"/>
    <property type="evidence" value="ECO:0007669"/>
    <property type="project" value="UniProtKB-KW"/>
</dbReference>
<dbReference type="GO" id="GO:0008174">
    <property type="term" value="F:mRNA methyltransferase activity"/>
    <property type="evidence" value="ECO:0007669"/>
    <property type="project" value="InterPro"/>
</dbReference>
<dbReference type="GO" id="GO:0003723">
    <property type="term" value="F:RNA binding"/>
    <property type="evidence" value="ECO:0007669"/>
    <property type="project" value="UniProtKB-KW"/>
</dbReference>
<dbReference type="GO" id="GO:0003724">
    <property type="term" value="F:RNA helicase activity"/>
    <property type="evidence" value="ECO:0007669"/>
    <property type="project" value="UniProtKB-EC"/>
</dbReference>
<dbReference type="GO" id="GO:0003968">
    <property type="term" value="F:RNA-directed RNA polymerase activity"/>
    <property type="evidence" value="ECO:0007669"/>
    <property type="project" value="UniProtKB-KW"/>
</dbReference>
<dbReference type="GO" id="GO:0006351">
    <property type="term" value="P:DNA-templated transcription"/>
    <property type="evidence" value="ECO:0007669"/>
    <property type="project" value="InterPro"/>
</dbReference>
<dbReference type="GO" id="GO:0032259">
    <property type="term" value="P:methylation"/>
    <property type="evidence" value="ECO:0007669"/>
    <property type="project" value="UniProtKB-KW"/>
</dbReference>
<dbReference type="GO" id="GO:0016556">
    <property type="term" value="P:mRNA modification"/>
    <property type="evidence" value="ECO:0007669"/>
    <property type="project" value="InterPro"/>
</dbReference>
<dbReference type="GO" id="GO:0006508">
    <property type="term" value="P:proteolysis"/>
    <property type="evidence" value="ECO:0007669"/>
    <property type="project" value="UniProtKB-KW"/>
</dbReference>
<dbReference type="GO" id="GO:0006396">
    <property type="term" value="P:RNA processing"/>
    <property type="evidence" value="ECO:0007669"/>
    <property type="project" value="InterPro"/>
</dbReference>
<dbReference type="CDD" id="cd23257">
    <property type="entry name" value="Benyviridae_RdRp"/>
    <property type="match status" value="1"/>
</dbReference>
<dbReference type="Gene3D" id="3.40.50.300">
    <property type="entry name" value="P-loop containing nucleotide triphosphate hydrolases"/>
    <property type="match status" value="2"/>
</dbReference>
<dbReference type="InterPro" id="IPR027351">
    <property type="entry name" value="(+)RNA_virus_helicase_core_dom"/>
</dbReference>
<dbReference type="InterPro" id="IPR002588">
    <property type="entry name" value="Alphavirus-like_MT_dom"/>
</dbReference>
<dbReference type="InterPro" id="IPR043502">
    <property type="entry name" value="DNA/RNA_pol_sf"/>
</dbReference>
<dbReference type="InterPro" id="IPR027417">
    <property type="entry name" value="P-loop_NTPase"/>
</dbReference>
<dbReference type="InterPro" id="IPR008746">
    <property type="entry name" value="Peptidase_C36"/>
</dbReference>
<dbReference type="InterPro" id="IPR001788">
    <property type="entry name" value="RNA-dep_RNA_pol_alsuvir"/>
</dbReference>
<dbReference type="Pfam" id="PF05415">
    <property type="entry name" value="Peptidase_C36"/>
    <property type="match status" value="1"/>
</dbReference>
<dbReference type="Pfam" id="PF00978">
    <property type="entry name" value="RdRP_2"/>
    <property type="match status" value="1"/>
</dbReference>
<dbReference type="Pfam" id="PF01443">
    <property type="entry name" value="Viral_helicase1"/>
    <property type="match status" value="1"/>
</dbReference>
<dbReference type="SUPFAM" id="SSF56672">
    <property type="entry name" value="DNA/RNA polymerases"/>
    <property type="match status" value="1"/>
</dbReference>
<dbReference type="SUPFAM" id="SSF52540">
    <property type="entry name" value="P-loop containing nucleoside triphosphate hydrolases"/>
    <property type="match status" value="1"/>
</dbReference>
<dbReference type="PROSITE" id="PS51743">
    <property type="entry name" value="ALPHAVIRUS_MT"/>
    <property type="match status" value="1"/>
</dbReference>
<dbReference type="PROSITE" id="PS51657">
    <property type="entry name" value="PSRV_HELICASE"/>
    <property type="match status" value="1"/>
</dbReference>
<accession>Q65667</accession>
<name>RDRP_BNYVS</name>
<organismHost>
    <name type="scientific">Beta macrocarpa</name>
    <name type="common">Beet</name>
    <name type="synonym">Beta vulgaris subsp. macrocarpa</name>
    <dbReference type="NCBI Taxonomy" id="343494"/>
</organismHost>
<organismHost>
    <name type="scientific">Beta vulgaris</name>
    <name type="common">Sugar beet</name>
    <dbReference type="NCBI Taxonomy" id="161934"/>
</organismHost>
<organismHost>
    <name type="scientific">Spinacia oleracea</name>
    <name type="common">Spinach</name>
    <dbReference type="NCBI Taxonomy" id="3562"/>
</organismHost>
<evidence type="ECO:0000255" key="1">
    <source>
        <dbReference type="PROSITE-ProRule" id="PRU01079"/>
    </source>
</evidence>
<evidence type="ECO:0000256" key="2">
    <source>
        <dbReference type="SAM" id="MobiDB-lite"/>
    </source>
</evidence>
<evidence type="ECO:0000269" key="3">
    <source>
    </source>
</evidence>
<evidence type="ECO:0000305" key="4"/>
<organism>
    <name type="scientific">Beet necrotic yellow vein virus (isolate Japan/S)</name>
    <name type="common">BNYVV</name>
    <dbReference type="NCBI Taxonomy" id="652670"/>
    <lineage>
        <taxon>Viruses</taxon>
        <taxon>Riboviria</taxon>
        <taxon>Orthornavirae</taxon>
        <taxon>Kitrinoviricota</taxon>
        <taxon>Alsuviricetes</taxon>
        <taxon>Hepelivirales</taxon>
        <taxon>Benyviridae</taxon>
        <taxon>Benyvirus</taxon>
        <taxon>Beet necrotic yellow vein virus</taxon>
    </lineage>
</organism>
<gene>
    <name type="ORF">ORF1</name>
</gene>